<accession>Q9LYD5</accession>
<evidence type="ECO:0000250" key="1"/>
<evidence type="ECO:0000255" key="2"/>
<evidence type="ECO:0000269" key="3">
    <source>
    </source>
</evidence>
<evidence type="ECO:0000305" key="4"/>
<name>PTR48_ARATH</name>
<keyword id="KW-0472">Membrane</keyword>
<keyword id="KW-1185">Reference proteome</keyword>
<keyword id="KW-0812">Transmembrane</keyword>
<keyword id="KW-1133">Transmembrane helix</keyword>
<keyword id="KW-0813">Transport</keyword>
<feature type="chain" id="PRO_0000399982" description="Protein NRT1/ PTR FAMILY 1.3">
    <location>
        <begin position="1"/>
        <end position="481"/>
    </location>
</feature>
<feature type="transmembrane region" description="Helical" evidence="2">
    <location>
        <begin position="32"/>
        <end position="52"/>
    </location>
</feature>
<feature type="transmembrane region" description="Helical" evidence="2">
    <location>
        <begin position="57"/>
        <end position="77"/>
    </location>
</feature>
<feature type="transmembrane region" description="Helical" evidence="2">
    <location>
        <begin position="88"/>
        <end position="108"/>
    </location>
</feature>
<feature type="transmembrane region" description="Helical" evidence="2">
    <location>
        <begin position="124"/>
        <end position="144"/>
    </location>
</feature>
<feature type="transmembrane region" description="Helical" evidence="2">
    <location>
        <begin position="173"/>
        <end position="193"/>
    </location>
</feature>
<feature type="transmembrane region" description="Helical" evidence="2">
    <location>
        <begin position="202"/>
        <end position="222"/>
    </location>
</feature>
<feature type="transmembrane region" description="Helical" evidence="2">
    <location>
        <begin position="259"/>
        <end position="279"/>
    </location>
</feature>
<feature type="transmembrane region" description="Helical" evidence="2">
    <location>
        <begin position="302"/>
        <end position="322"/>
    </location>
</feature>
<feature type="transmembrane region" description="Helical" evidence="2">
    <location>
        <begin position="333"/>
        <end position="353"/>
    </location>
</feature>
<feature type="transmembrane region" description="Helical" evidence="2">
    <location>
        <begin position="374"/>
        <end position="394"/>
    </location>
</feature>
<feature type="transmembrane region" description="Helical" evidence="2">
    <location>
        <begin position="422"/>
        <end position="442"/>
    </location>
</feature>
<feature type="transmembrane region" description="Helical" evidence="2">
    <location>
        <begin position="451"/>
        <end position="471"/>
    </location>
</feature>
<gene>
    <name type="primary">NPF1.3</name>
    <name type="ordered locus">At5g11570</name>
    <name type="ORF">F15N18.160</name>
</gene>
<comment type="subcellular location">
    <subcellularLocation>
        <location evidence="1">Membrane</location>
        <topology evidence="1">Multi-pass membrane protein</topology>
    </subcellularLocation>
</comment>
<comment type="tissue specificity">
    <text evidence="3">Expressed in roots.</text>
</comment>
<comment type="similarity">
    <text evidence="4">Belongs to the major facilitator superfamily. Proton-dependent oligopeptide transporter (POT/PTR) (TC 2.A.17) family.</text>
</comment>
<sequence>MDQEALLVGRTLLKRGIPTIPFILASQALEKLAYFGLVPNMILFLTVEYGMGTAEAANILFLWSAATNFFPLVGAFIADSYTGRFPLIGFGSSISLTGMVLLWLTTIIRPECDKLTNVCQPTTLLKSVLLYSFFALTAIGAGGVRSSCLAFAADQLQPNQTSRVTTSSLETLFNWYYFSVMVACFLSQSLLVFVQTTYGWQIGFGVSVAAMALSVALFFAASPYYVRFQKPTRNSRNPWKLCRVQQVEDLKSLINVIPIWSTGIILSLVTACQVSFIVLQAKTMDRHTFIQGFEIPPGSYGIFLVISFLLFLGLYDLVIVPLLSWALREPFRLGVMVRMWAGYVISVLCISALAATEYARRKTARDESGTKLSAMWLLPYMILGGIAEALNTIAQNEFFYSELPKTMSSVATTLSSLNMAAASLISSWIITIVDVTTYGSWITENIDEGHLDYYYWLLVGLSLLNVLYFVWCKKSYGKCSI</sequence>
<dbReference type="EMBL" id="AL163815">
    <property type="protein sequence ID" value="CAB87717.1"/>
    <property type="molecule type" value="Genomic_DNA"/>
</dbReference>
<dbReference type="EMBL" id="CP002688">
    <property type="protein sequence ID" value="AED91696.1"/>
    <property type="molecule type" value="Genomic_DNA"/>
</dbReference>
<dbReference type="PIR" id="T48516">
    <property type="entry name" value="T48516"/>
</dbReference>
<dbReference type="RefSeq" id="NP_196718.1">
    <property type="nucleotide sequence ID" value="NM_121195.2"/>
</dbReference>
<dbReference type="SMR" id="Q9LYD5"/>
<dbReference type="STRING" id="3702.Q9LYD5"/>
<dbReference type="PaxDb" id="3702-AT5G11570.1"/>
<dbReference type="EnsemblPlants" id="AT5G11570.1">
    <property type="protein sequence ID" value="AT5G11570.1"/>
    <property type="gene ID" value="AT5G11570"/>
</dbReference>
<dbReference type="GeneID" id="831029"/>
<dbReference type="Gramene" id="AT5G11570.1">
    <property type="protein sequence ID" value="AT5G11570.1"/>
    <property type="gene ID" value="AT5G11570"/>
</dbReference>
<dbReference type="KEGG" id="ath:AT5G11570"/>
<dbReference type="Araport" id="AT5G11570"/>
<dbReference type="TAIR" id="AT5G11570"/>
<dbReference type="eggNOG" id="KOG1237">
    <property type="taxonomic scope" value="Eukaryota"/>
</dbReference>
<dbReference type="HOGENOM" id="CLU_009313_4_2_1"/>
<dbReference type="InParanoid" id="Q9LYD5"/>
<dbReference type="OMA" id="SSWIITI"/>
<dbReference type="PhylomeDB" id="Q9LYD5"/>
<dbReference type="PRO" id="PR:Q9LYD5"/>
<dbReference type="Proteomes" id="UP000006548">
    <property type="component" value="Chromosome 5"/>
</dbReference>
<dbReference type="ExpressionAtlas" id="Q9LYD5">
    <property type="expression patterns" value="baseline and differential"/>
</dbReference>
<dbReference type="GO" id="GO:0016020">
    <property type="term" value="C:membrane"/>
    <property type="evidence" value="ECO:0007669"/>
    <property type="project" value="UniProtKB-SubCell"/>
</dbReference>
<dbReference type="GO" id="GO:0022857">
    <property type="term" value="F:transmembrane transporter activity"/>
    <property type="evidence" value="ECO:0007669"/>
    <property type="project" value="InterPro"/>
</dbReference>
<dbReference type="CDD" id="cd17416">
    <property type="entry name" value="MFS_NPF1_2"/>
    <property type="match status" value="1"/>
</dbReference>
<dbReference type="Gene3D" id="1.20.1250.20">
    <property type="entry name" value="MFS general substrate transporter like domains"/>
    <property type="match status" value="2"/>
</dbReference>
<dbReference type="InterPro" id="IPR036259">
    <property type="entry name" value="MFS_trans_sf"/>
</dbReference>
<dbReference type="InterPro" id="IPR000109">
    <property type="entry name" value="POT_fam"/>
</dbReference>
<dbReference type="PANTHER" id="PTHR11654">
    <property type="entry name" value="OLIGOPEPTIDE TRANSPORTER-RELATED"/>
    <property type="match status" value="1"/>
</dbReference>
<dbReference type="Pfam" id="PF00854">
    <property type="entry name" value="PTR2"/>
    <property type="match status" value="2"/>
</dbReference>
<dbReference type="SUPFAM" id="SSF103473">
    <property type="entry name" value="MFS general substrate transporter"/>
    <property type="match status" value="1"/>
</dbReference>
<organism>
    <name type="scientific">Arabidopsis thaliana</name>
    <name type="common">Mouse-ear cress</name>
    <dbReference type="NCBI Taxonomy" id="3702"/>
    <lineage>
        <taxon>Eukaryota</taxon>
        <taxon>Viridiplantae</taxon>
        <taxon>Streptophyta</taxon>
        <taxon>Embryophyta</taxon>
        <taxon>Tracheophyta</taxon>
        <taxon>Spermatophyta</taxon>
        <taxon>Magnoliopsida</taxon>
        <taxon>eudicotyledons</taxon>
        <taxon>Gunneridae</taxon>
        <taxon>Pentapetalae</taxon>
        <taxon>rosids</taxon>
        <taxon>malvids</taxon>
        <taxon>Brassicales</taxon>
        <taxon>Brassicaceae</taxon>
        <taxon>Camelineae</taxon>
        <taxon>Arabidopsis</taxon>
    </lineage>
</organism>
<proteinExistence type="evidence at transcript level"/>
<protein>
    <recommendedName>
        <fullName>Protein NRT1/ PTR FAMILY 1.3</fullName>
        <shortName>AtNPF1.3</shortName>
    </recommendedName>
</protein>
<reference key="1">
    <citation type="journal article" date="2000" name="Nature">
        <title>Sequence and analysis of chromosome 5 of the plant Arabidopsis thaliana.</title>
        <authorList>
            <person name="Tabata S."/>
            <person name="Kaneko T."/>
            <person name="Nakamura Y."/>
            <person name="Kotani H."/>
            <person name="Kato T."/>
            <person name="Asamizu E."/>
            <person name="Miyajima N."/>
            <person name="Sasamoto S."/>
            <person name="Kimura T."/>
            <person name="Hosouchi T."/>
            <person name="Kawashima K."/>
            <person name="Kohara M."/>
            <person name="Matsumoto M."/>
            <person name="Matsuno A."/>
            <person name="Muraki A."/>
            <person name="Nakayama S."/>
            <person name="Nakazaki N."/>
            <person name="Naruo K."/>
            <person name="Okumura S."/>
            <person name="Shinpo S."/>
            <person name="Takeuchi C."/>
            <person name="Wada T."/>
            <person name="Watanabe A."/>
            <person name="Yamada M."/>
            <person name="Yasuda M."/>
            <person name="Sato S."/>
            <person name="de la Bastide M."/>
            <person name="Huang E."/>
            <person name="Spiegel L."/>
            <person name="Gnoj L."/>
            <person name="O'Shaughnessy A."/>
            <person name="Preston R."/>
            <person name="Habermann K."/>
            <person name="Murray J."/>
            <person name="Johnson D."/>
            <person name="Rohlfing T."/>
            <person name="Nelson J."/>
            <person name="Stoneking T."/>
            <person name="Pepin K."/>
            <person name="Spieth J."/>
            <person name="Sekhon M."/>
            <person name="Armstrong J."/>
            <person name="Becker M."/>
            <person name="Belter E."/>
            <person name="Cordum H."/>
            <person name="Cordes M."/>
            <person name="Courtney L."/>
            <person name="Courtney W."/>
            <person name="Dante M."/>
            <person name="Du H."/>
            <person name="Edwards J."/>
            <person name="Fryman J."/>
            <person name="Haakensen B."/>
            <person name="Lamar E."/>
            <person name="Latreille P."/>
            <person name="Leonard S."/>
            <person name="Meyer R."/>
            <person name="Mulvaney E."/>
            <person name="Ozersky P."/>
            <person name="Riley A."/>
            <person name="Strowmatt C."/>
            <person name="Wagner-McPherson C."/>
            <person name="Wollam A."/>
            <person name="Yoakum M."/>
            <person name="Bell M."/>
            <person name="Dedhia N."/>
            <person name="Parnell L."/>
            <person name="Shah R."/>
            <person name="Rodriguez M."/>
            <person name="Hoon See L."/>
            <person name="Vil D."/>
            <person name="Baker J."/>
            <person name="Kirchoff K."/>
            <person name="Toth K."/>
            <person name="King L."/>
            <person name="Bahret A."/>
            <person name="Miller B."/>
            <person name="Marra M.A."/>
            <person name="Martienssen R."/>
            <person name="McCombie W.R."/>
            <person name="Wilson R.K."/>
            <person name="Murphy G."/>
            <person name="Bancroft I."/>
            <person name="Volckaert G."/>
            <person name="Wambutt R."/>
            <person name="Duesterhoeft A."/>
            <person name="Stiekema W."/>
            <person name="Pohl T."/>
            <person name="Entian K.-D."/>
            <person name="Terryn N."/>
            <person name="Hartley N."/>
            <person name="Bent E."/>
            <person name="Johnson S."/>
            <person name="Langham S.-A."/>
            <person name="McCullagh B."/>
            <person name="Robben J."/>
            <person name="Grymonprez B."/>
            <person name="Zimmermann W."/>
            <person name="Ramsperger U."/>
            <person name="Wedler H."/>
            <person name="Balke K."/>
            <person name="Wedler E."/>
            <person name="Peters S."/>
            <person name="van Staveren M."/>
            <person name="Dirkse W."/>
            <person name="Mooijman P."/>
            <person name="Klein Lankhorst R."/>
            <person name="Weitzenegger T."/>
            <person name="Bothe G."/>
            <person name="Rose M."/>
            <person name="Hauf J."/>
            <person name="Berneiser S."/>
            <person name="Hempel S."/>
            <person name="Feldpausch M."/>
            <person name="Lamberth S."/>
            <person name="Villarroel R."/>
            <person name="Gielen J."/>
            <person name="Ardiles W."/>
            <person name="Bents O."/>
            <person name="Lemcke K."/>
            <person name="Kolesov G."/>
            <person name="Mayer K.F.X."/>
            <person name="Rudd S."/>
            <person name="Schoof H."/>
            <person name="Schueller C."/>
            <person name="Zaccaria P."/>
            <person name="Mewes H.-W."/>
            <person name="Bevan M."/>
            <person name="Fransz P.F."/>
        </authorList>
    </citation>
    <scope>NUCLEOTIDE SEQUENCE [LARGE SCALE GENOMIC DNA]</scope>
    <source>
        <strain>cv. Columbia</strain>
    </source>
</reference>
<reference key="2">
    <citation type="journal article" date="2017" name="Plant J.">
        <title>Araport11: a complete reannotation of the Arabidopsis thaliana reference genome.</title>
        <authorList>
            <person name="Cheng C.Y."/>
            <person name="Krishnakumar V."/>
            <person name="Chan A.P."/>
            <person name="Thibaud-Nissen F."/>
            <person name="Schobel S."/>
            <person name="Town C.D."/>
        </authorList>
    </citation>
    <scope>GENOME REANNOTATION</scope>
    <source>
        <strain>cv. Columbia</strain>
    </source>
</reference>
<reference key="3">
    <citation type="journal article" date="2007" name="FEBS Lett.">
        <title>Nitrate transporters and peptide transporters.</title>
        <authorList>
            <person name="Tsay Y.F."/>
            <person name="Chiu C.C."/>
            <person name="Tsai C.B."/>
            <person name="Ho C.H."/>
            <person name="Hsu P.K."/>
        </authorList>
    </citation>
    <scope>TISSUE SPECIFICITY</scope>
    <scope>GENE FAMILY</scope>
</reference>
<reference key="4">
    <citation type="journal article" date="2010" name="Plant Cell">
        <title>The Arabidopsis nitrate transporter NRT1.8 functions in nitrate removal from the xylem sap and mediates cadmium tolerance.</title>
        <authorList>
            <person name="Li J.Y."/>
            <person name="Fu Y.L."/>
            <person name="Pike S.M."/>
            <person name="Bao J."/>
            <person name="Tian W."/>
            <person name="Zhang Y."/>
            <person name="Chen C.Z."/>
            <person name="Zhang Y."/>
            <person name="Li H.M."/>
            <person name="Huang J."/>
            <person name="Li L.G."/>
            <person name="Schroeder J.I."/>
            <person name="Gassmann W."/>
            <person name="Gong J.M."/>
        </authorList>
    </citation>
    <scope>GENE FAMILY</scope>
</reference>
<reference key="5">
    <citation type="journal article" date="2014" name="Trends Plant Sci.">
        <title>A unified nomenclature of NITRATE TRANSPORTER 1/PEPTIDE TRANSPORTER family members in plants.</title>
        <authorList>
            <person name="Leran S."/>
            <person name="Varala K."/>
            <person name="Boyer J.C."/>
            <person name="Chiurazzi M."/>
            <person name="Crawford N."/>
            <person name="Daniel-Vedele F."/>
            <person name="David L."/>
            <person name="Dickstein R."/>
            <person name="Fernandez E."/>
            <person name="Forde B."/>
            <person name="Gassmann W."/>
            <person name="Geiger D."/>
            <person name="Gojon A."/>
            <person name="Gong J.M."/>
            <person name="Halkier B.A."/>
            <person name="Harris J.M."/>
            <person name="Hedrich R."/>
            <person name="Limami A.M."/>
            <person name="Rentsch D."/>
            <person name="Seo M."/>
            <person name="Tsay Y.F."/>
            <person name="Zhang M."/>
            <person name="Coruzzi G."/>
            <person name="Lacombe B."/>
        </authorList>
    </citation>
    <scope>GENE FAMILY</scope>
    <scope>NOMENCLATURE</scope>
</reference>